<organism>
    <name type="scientific">Bos taurus</name>
    <name type="common">Bovine</name>
    <dbReference type="NCBI Taxonomy" id="9913"/>
    <lineage>
        <taxon>Eukaryota</taxon>
        <taxon>Metazoa</taxon>
        <taxon>Chordata</taxon>
        <taxon>Craniata</taxon>
        <taxon>Vertebrata</taxon>
        <taxon>Euteleostomi</taxon>
        <taxon>Mammalia</taxon>
        <taxon>Eutheria</taxon>
        <taxon>Laurasiatheria</taxon>
        <taxon>Artiodactyla</taxon>
        <taxon>Ruminantia</taxon>
        <taxon>Pecora</taxon>
        <taxon>Bovidae</taxon>
        <taxon>Bovinae</taxon>
        <taxon>Bos</taxon>
    </lineage>
</organism>
<name>LHPL4_BOVIN</name>
<protein>
    <recommendedName>
        <fullName evidence="3">LHFPL tetraspan subfamily member 4 protein</fullName>
    </recommendedName>
    <alternativeName>
        <fullName evidence="3">Lipoma HMGIC fusion partner-like 4 protein</fullName>
    </alternativeName>
</protein>
<comment type="function">
    <text evidence="1">Plays a role in the regulation of inhibitory synapse formation and function by being involved in maintening gamma-aminobutyric acid receptors (GABAARs) clustering and their associated scaffold proteins at inhibitory synaptic sites. Acts in concert with NLGN2 to recruit or stabilize GABAARs.</text>
</comment>
<comment type="subunit">
    <text evidence="1 2 3">Interacts with GABA(A) receptor subunits (By similarity). Interacts with GABRB3 (By similarity). Interacts with GABRA2 (By similarity). Interacts with GABRG2 (By similarity). Identified in a complex of 720 kDa composed of LHFPL4, NLGN2, GABRA1, GABRB2, GABRG2 and GABRB3 (By similarity). Interacts with GABRA1 (By similarity). Interacts with NLGN2; leading to mutual regulation of protein level and synaptic clustering (By similarity).</text>
</comment>
<comment type="subcellular location">
    <subcellularLocation>
        <location evidence="2">Cell projection</location>
        <location evidence="2">Dendrite</location>
    </subcellularLocation>
    <subcellularLocation>
        <location evidence="1">Postsynaptic cell membrane</location>
        <topology evidence="4">Multi-pass membrane protein</topology>
    </subcellularLocation>
    <text evidence="1 2">Specifically localizes to inhibitory postsynaptic sites (By similarity). Colocalizes with GPHN, GABRG2 and NLGN2 at inhibitory postsynaptic sites (By similarity).</text>
</comment>
<comment type="similarity">
    <text evidence="5">Belongs to the LHFP family.</text>
</comment>
<accession>Q17R16</accession>
<evidence type="ECO:0000250" key="1">
    <source>
        <dbReference type="UniProtKB" id="Q5U4E0"/>
    </source>
</evidence>
<evidence type="ECO:0000250" key="2">
    <source>
        <dbReference type="UniProtKB" id="Q7TSY2"/>
    </source>
</evidence>
<evidence type="ECO:0000250" key="3">
    <source>
        <dbReference type="UniProtKB" id="Q7Z7J7"/>
    </source>
</evidence>
<evidence type="ECO:0000255" key="4"/>
<evidence type="ECO:0000305" key="5"/>
<feature type="chain" id="PRO_0000285960" description="LHFPL tetraspan subfamily member 4 protein">
    <location>
        <begin position="1"/>
        <end position="247"/>
    </location>
</feature>
<feature type="transmembrane region" description="Helical" evidence="4">
    <location>
        <begin position="22"/>
        <end position="42"/>
    </location>
</feature>
<feature type="transmembrane region" description="Helical" evidence="4">
    <location>
        <begin position="97"/>
        <end position="117"/>
    </location>
</feature>
<feature type="transmembrane region" description="Helical" evidence="4">
    <location>
        <begin position="127"/>
        <end position="147"/>
    </location>
</feature>
<feature type="transmembrane region" description="Helical" evidence="4">
    <location>
        <begin position="178"/>
        <end position="198"/>
    </location>
</feature>
<gene>
    <name evidence="3" type="primary">LHFPL4</name>
</gene>
<reference key="1">
    <citation type="submission" date="2006-06" db="EMBL/GenBank/DDBJ databases">
        <authorList>
            <consortium name="NIH - Mammalian Gene Collection (MGC) project"/>
        </authorList>
    </citation>
    <scope>NUCLEOTIDE SEQUENCE [LARGE SCALE MRNA]</scope>
    <source>
        <strain>Hereford</strain>
        <tissue>Hypothalamus</tissue>
    </source>
</reference>
<dbReference type="EMBL" id="BC118076">
    <property type="protein sequence ID" value="AAI18077.1"/>
    <property type="molecule type" value="mRNA"/>
</dbReference>
<dbReference type="RefSeq" id="NP_001069694.1">
    <property type="nucleotide sequence ID" value="NM_001076226.1"/>
</dbReference>
<dbReference type="SMR" id="Q17R16"/>
<dbReference type="FunCoup" id="Q17R16">
    <property type="interactions" value="1404"/>
</dbReference>
<dbReference type="STRING" id="9913.ENSBTAP00000044599"/>
<dbReference type="PaxDb" id="9913-ENSBTAP00000044599"/>
<dbReference type="Ensembl" id="ENSBTAT00000047389.4">
    <property type="protein sequence ID" value="ENSBTAP00000044599.3"/>
    <property type="gene ID" value="ENSBTAG00000010916.6"/>
</dbReference>
<dbReference type="GeneID" id="540541"/>
<dbReference type="KEGG" id="bta:540541"/>
<dbReference type="CTD" id="375323"/>
<dbReference type="VEuPathDB" id="HostDB:ENSBTAG00000010916"/>
<dbReference type="VGNC" id="VGNC:30867">
    <property type="gene designation" value="LHFPL4"/>
</dbReference>
<dbReference type="eggNOG" id="KOG4026">
    <property type="taxonomic scope" value="Eukaryota"/>
</dbReference>
<dbReference type="GeneTree" id="ENSGT00990000203541"/>
<dbReference type="HOGENOM" id="CLU_084868_1_2_1"/>
<dbReference type="InParanoid" id="Q17R16"/>
<dbReference type="OMA" id="RDMCGEH"/>
<dbReference type="OrthoDB" id="5873721at2759"/>
<dbReference type="TreeFam" id="TF321143"/>
<dbReference type="Proteomes" id="UP000009136">
    <property type="component" value="Chromosome 22"/>
</dbReference>
<dbReference type="Bgee" id="ENSBTAG00000010916">
    <property type="expression patterns" value="Expressed in Ammon's horn and 43 other cell types or tissues"/>
</dbReference>
<dbReference type="GO" id="GO:0030425">
    <property type="term" value="C:dendrite"/>
    <property type="evidence" value="ECO:0007669"/>
    <property type="project" value="UniProtKB-SubCell"/>
</dbReference>
<dbReference type="GO" id="GO:0098982">
    <property type="term" value="C:GABA-ergic synapse"/>
    <property type="evidence" value="ECO:0007669"/>
    <property type="project" value="Ensembl"/>
</dbReference>
<dbReference type="GO" id="GO:0060077">
    <property type="term" value="C:inhibitory synapse"/>
    <property type="evidence" value="ECO:0000250"/>
    <property type="project" value="UniProtKB"/>
</dbReference>
<dbReference type="GO" id="GO:0005886">
    <property type="term" value="C:plasma membrane"/>
    <property type="evidence" value="ECO:0000318"/>
    <property type="project" value="GO_Central"/>
</dbReference>
<dbReference type="GO" id="GO:0045211">
    <property type="term" value="C:postsynaptic membrane"/>
    <property type="evidence" value="ECO:0000250"/>
    <property type="project" value="UniProtKB"/>
</dbReference>
<dbReference type="GO" id="GO:0099572">
    <property type="term" value="C:postsynaptic specialization"/>
    <property type="evidence" value="ECO:0007669"/>
    <property type="project" value="Ensembl"/>
</dbReference>
<dbReference type="GO" id="GO:0050811">
    <property type="term" value="F:GABA receptor binding"/>
    <property type="evidence" value="ECO:0000250"/>
    <property type="project" value="UniProtKB"/>
</dbReference>
<dbReference type="GO" id="GO:0097112">
    <property type="term" value="P:gamma-aminobutyric acid receptor clustering"/>
    <property type="evidence" value="ECO:0000250"/>
    <property type="project" value="UniProtKB"/>
</dbReference>
<dbReference type="GO" id="GO:0099645">
    <property type="term" value="P:neurotransmitter receptor localization to postsynaptic specialization membrane"/>
    <property type="evidence" value="ECO:0007669"/>
    <property type="project" value="Ensembl"/>
</dbReference>
<dbReference type="GO" id="GO:1905702">
    <property type="term" value="P:regulation of inhibitory synapse assembly"/>
    <property type="evidence" value="ECO:0000250"/>
    <property type="project" value="UniProtKB"/>
</dbReference>
<dbReference type="GO" id="GO:0007605">
    <property type="term" value="P:sensory perception of sound"/>
    <property type="evidence" value="ECO:0000318"/>
    <property type="project" value="GO_Central"/>
</dbReference>
<dbReference type="FunFam" id="1.20.140.150:FF:000035">
    <property type="entry name" value="LHFPL tetraspan subfamily member 4 protein"/>
    <property type="match status" value="1"/>
</dbReference>
<dbReference type="Gene3D" id="1.20.140.150">
    <property type="match status" value="1"/>
</dbReference>
<dbReference type="InterPro" id="IPR019372">
    <property type="entry name" value="LHFPL"/>
</dbReference>
<dbReference type="PANTHER" id="PTHR12489:SF14">
    <property type="entry name" value="LHFPL TETRASPAN SUBFAMILY MEMBER 4 PROTEIN"/>
    <property type="match status" value="1"/>
</dbReference>
<dbReference type="PANTHER" id="PTHR12489">
    <property type="entry name" value="LIPOMA HMGIC FUSION PARTNER-LIKE PROTEIN"/>
    <property type="match status" value="1"/>
</dbReference>
<dbReference type="Pfam" id="PF10242">
    <property type="entry name" value="L_HMGIC_fpl"/>
    <property type="match status" value="1"/>
</dbReference>
<proteinExistence type="evidence at transcript level"/>
<sequence>MLPSQEASKLYHEHYMRNSRAIGVLWAIFTICFAIINVVVFIQPYWVGDSVSTPKPGYFGLFHYCVGSGLAGRELTCRGSFTDFSTIPSGAFKAAAFFVLLSMVLILGCITCFALFFFCNTATVYKICAWMQLLAALCLVLGCMIFPDGWDAETIRDMCGAKTGKYSLGDCSVRWAYILAIIGILNALILSFLAFVLGNRQTDLLQEELKQENKDFVGSTVSSVLRPGGDVSGWGVLPCPVAHTQGP</sequence>
<keyword id="KW-1003">Cell membrane</keyword>
<keyword id="KW-0966">Cell projection</keyword>
<keyword id="KW-0472">Membrane</keyword>
<keyword id="KW-0628">Postsynaptic cell membrane</keyword>
<keyword id="KW-1185">Reference proteome</keyword>
<keyword id="KW-0770">Synapse</keyword>
<keyword id="KW-0812">Transmembrane</keyword>
<keyword id="KW-1133">Transmembrane helix</keyword>